<organism>
    <name type="scientific">Schizosaccharomyces pombe (strain 972 / ATCC 24843)</name>
    <name type="common">Fission yeast</name>
    <dbReference type="NCBI Taxonomy" id="284812"/>
    <lineage>
        <taxon>Eukaryota</taxon>
        <taxon>Fungi</taxon>
        <taxon>Dikarya</taxon>
        <taxon>Ascomycota</taxon>
        <taxon>Taphrinomycotina</taxon>
        <taxon>Schizosaccharomycetes</taxon>
        <taxon>Schizosaccharomycetales</taxon>
        <taxon>Schizosaccharomycetaceae</taxon>
        <taxon>Schizosaccharomyces</taxon>
    </lineage>
</organism>
<feature type="chain" id="PRO_0000096751" description="DNA repair and telomere maintenance protein nbs1">
    <location>
        <begin position="1"/>
        <end position="613"/>
    </location>
</feature>
<feature type="domain" description="FHA" evidence="2">
    <location>
        <begin position="23"/>
        <end position="86"/>
    </location>
</feature>
<feature type="domain" description="BRCT 1" evidence="9">
    <location>
        <begin position="107"/>
        <end position="186"/>
    </location>
</feature>
<feature type="domain" description="BRCT 2" evidence="9">
    <location>
        <begin position="228"/>
        <end position="302"/>
    </location>
</feature>
<feature type="region of interest" description="Disordered" evidence="3">
    <location>
        <begin position="381"/>
        <end position="428"/>
    </location>
</feature>
<feature type="region of interest" description="Disordered" evidence="3">
    <location>
        <begin position="546"/>
        <end position="613"/>
    </location>
</feature>
<feature type="short sequence motif" description="FxF/Y motif" evidence="6">
    <location>
        <begin position="611"/>
        <end position="613"/>
    </location>
</feature>
<feature type="compositionally biased region" description="Polar residues" evidence="3">
    <location>
        <begin position="387"/>
        <end position="399"/>
    </location>
</feature>
<feature type="compositionally biased region" description="Basic and acidic residues" evidence="3">
    <location>
        <begin position="400"/>
        <end position="409"/>
    </location>
</feature>
<feature type="compositionally biased region" description="Low complexity" evidence="3">
    <location>
        <begin position="574"/>
        <end position="592"/>
    </location>
</feature>
<feature type="modified residue" description="Phosphoserine" evidence="7">
    <location>
        <position position="355"/>
    </location>
</feature>
<feature type="mutagenesis site" description="Strongly decreased ability to recognize and bind phosphorylated proteins." evidence="9">
    <original>R</original>
    <variation>A</variation>
    <location>
        <position position="27"/>
    </location>
</feature>
<feature type="mutagenesis site" description="Strongly decreased ability to recognize and bind phosphorylated proteins." evidence="9">
    <original>K</original>
    <variation>A</variation>
    <location>
        <position position="45"/>
    </location>
</feature>
<feature type="mutagenesis site" description="Strongly decreased ability to recognize and bind phosphorylated proteins." evidence="9">
    <original>K</original>
    <variation>A</variation>
    <location>
        <position position="76"/>
    </location>
</feature>
<feature type="mutagenesis site" description="Strongly decreased ability to recognize and bind phosphorylated proteins." evidence="9">
    <original>G</original>
    <variation>D</variation>
    <location>
        <position position="103"/>
    </location>
</feature>
<feature type="strand" evidence="21">
    <location>
        <begin position="2"/>
        <end position="7"/>
    </location>
</feature>
<feature type="turn" evidence="21">
    <location>
        <begin position="8"/>
        <end position="13"/>
    </location>
</feature>
<feature type="strand" evidence="21">
    <location>
        <begin position="16"/>
        <end position="18"/>
    </location>
</feature>
<feature type="strand" evidence="21">
    <location>
        <begin position="20"/>
        <end position="28"/>
    </location>
</feature>
<feature type="strand" evidence="21">
    <location>
        <begin position="35"/>
        <end position="37"/>
    </location>
</feature>
<feature type="strand" evidence="22">
    <location>
        <begin position="41"/>
        <end position="43"/>
    </location>
</feature>
<feature type="strand" evidence="21">
    <location>
        <begin position="48"/>
        <end position="52"/>
    </location>
</feature>
<feature type="helix" evidence="21">
    <location>
        <begin position="57"/>
        <end position="62"/>
    </location>
</feature>
<feature type="strand" evidence="21">
    <location>
        <begin position="68"/>
        <end position="72"/>
    </location>
</feature>
<feature type="strand" evidence="21">
    <location>
        <begin position="79"/>
        <end position="81"/>
    </location>
</feature>
<feature type="strand" evidence="22">
    <location>
        <begin position="84"/>
        <end position="86"/>
    </location>
</feature>
<feature type="strand" evidence="21">
    <location>
        <begin position="91"/>
        <end position="93"/>
    </location>
</feature>
<feature type="strand" evidence="21">
    <location>
        <begin position="95"/>
        <end position="102"/>
    </location>
</feature>
<feature type="strand" evidence="21">
    <location>
        <begin position="109"/>
        <end position="113"/>
    </location>
</feature>
<feature type="strand" evidence="21">
    <location>
        <begin position="118"/>
        <end position="121"/>
    </location>
</feature>
<feature type="helix" evidence="21">
    <location>
        <begin position="123"/>
        <end position="134"/>
    </location>
</feature>
<feature type="turn" evidence="21">
    <location>
        <begin position="135"/>
        <end position="137"/>
    </location>
</feature>
<feature type="strand" evidence="21">
    <location>
        <begin position="140"/>
        <end position="143"/>
    </location>
</feature>
<feature type="strand" evidence="21">
    <location>
        <begin position="150"/>
        <end position="152"/>
    </location>
</feature>
<feature type="strand" evidence="23">
    <location>
        <begin position="157"/>
        <end position="159"/>
    </location>
</feature>
<feature type="helix" evidence="21">
    <location>
        <begin position="163"/>
        <end position="170"/>
    </location>
</feature>
<feature type="strand" evidence="21">
    <location>
        <begin position="174"/>
        <end position="176"/>
    </location>
</feature>
<feature type="helix" evidence="21">
    <location>
        <begin position="178"/>
        <end position="184"/>
    </location>
</feature>
<feature type="helix" evidence="23">
    <location>
        <begin position="190"/>
        <end position="193"/>
    </location>
</feature>
<feature type="helix" evidence="23">
    <location>
        <begin position="195"/>
        <end position="197"/>
    </location>
</feature>
<feature type="helix" evidence="21">
    <location>
        <begin position="198"/>
        <end position="209"/>
    </location>
</feature>
<feature type="helix" evidence="21">
    <location>
        <begin position="219"/>
        <end position="222"/>
    </location>
</feature>
<feature type="turn" evidence="21">
    <location>
        <begin position="223"/>
        <end position="228"/>
    </location>
</feature>
<feature type="strand" evidence="21">
    <location>
        <begin position="230"/>
        <end position="234"/>
    </location>
</feature>
<feature type="helix" evidence="21">
    <location>
        <begin position="238"/>
        <end position="246"/>
    </location>
</feature>
<feature type="strand" evidence="21">
    <location>
        <begin position="250"/>
        <end position="254"/>
    </location>
</feature>
<feature type="helix" evidence="23">
    <location>
        <begin position="257"/>
        <end position="259"/>
    </location>
</feature>
<feature type="strand" evidence="21">
    <location>
        <begin position="264"/>
        <end position="267"/>
    </location>
</feature>
<feature type="strand" evidence="21">
    <location>
        <begin position="269"/>
        <end position="273"/>
    </location>
</feature>
<feature type="helix" evidence="23">
    <location>
        <begin position="275"/>
        <end position="279"/>
    </location>
</feature>
<feature type="strand" evidence="22">
    <location>
        <begin position="283"/>
        <end position="285"/>
    </location>
</feature>
<feature type="strand" evidence="21">
    <location>
        <begin position="291"/>
        <end position="293"/>
    </location>
</feature>
<feature type="helix" evidence="21">
    <location>
        <begin position="294"/>
        <end position="302"/>
    </location>
</feature>
<feature type="strand" evidence="21">
    <location>
        <begin position="303"/>
        <end position="306"/>
    </location>
</feature>
<feature type="turn" evidence="21">
    <location>
        <begin position="307"/>
        <end position="312"/>
    </location>
</feature>
<feature type="helix" evidence="21">
    <location>
        <begin position="314"/>
        <end position="319"/>
    </location>
</feature>
<feature type="helix" evidence="24">
    <location>
        <begin position="478"/>
        <end position="486"/>
    </location>
</feature>
<feature type="strand" evidence="25">
    <location>
        <begin position="491"/>
        <end position="496"/>
    </location>
</feature>
<sequence>MWIIEAEGDILKGKSRILFPGTYIVGRNVSDDSSHIQVISKSISKRHARFTILTPSEKDYFTGGPCEFEVKDLDTKFGTKVNEKVVGQNGDSYKEKDLKIQLGKCPFTINAYWRSMCIQFDNPEMLSQWASNLNLLGIPTGLRDSDATTHFVMNRQAGSSITVGTMYAFLKKTVIIDDSYLQYLSTVKESVIEDASLMPDALECFKNIIKNNDQFPSSPEDCINSLEGFSCAMLNTSSESHHLLELLGLRISTFMSLGDIDKELISKTDFVVLNNAVYDSEKISFPEGIFCLTIEQLWKIIIERNSRELISKEIERLKYATASNSTPQKIIQPQRHIQKNIVDDLFSVKKPLPCSPKSKRVKTLENLSIMDFVQPKQMFGKEPEGYLSNQSNNGSAQNKKSGDNSEKTKNSLKSSSKKSANTGSGQGKTKVEYVSYNSVDKGNSSPFKPLELNVVGEKKANAEVDSLPSENVQESEDDKAFEENRRLRNLGSVEYIRIMSSEKSNANSRHTSKYYSGRKNFKKFQKKASQKAPLQAFLSLSEHKKTEVFDQDDTDLEPVPRLMSKVESIPAGASSDKSGKSSISKKSSNSFKELSPKTNNDEDDEFNDLKFHF</sequence>
<dbReference type="EMBL" id="AB099299">
    <property type="protein sequence ID" value="BAC80248.1"/>
    <property type="molecule type" value="mRNA"/>
</dbReference>
<dbReference type="EMBL" id="AY269280">
    <property type="protein sequence ID" value="AAP32157.1"/>
    <property type="molecule type" value="mRNA"/>
</dbReference>
<dbReference type="EMBL" id="CU329671">
    <property type="protein sequence ID" value="CAD88196.1"/>
    <property type="molecule type" value="Genomic_DNA"/>
</dbReference>
<dbReference type="RefSeq" id="NP_001018823.1">
    <property type="nucleotide sequence ID" value="NM_001022003.2"/>
</dbReference>
<dbReference type="PDB" id="3HUE">
    <property type="method" value="X-ray"/>
    <property type="resolution" value="2.80 A"/>
    <property type="chains" value="A=1-330"/>
</dbReference>
<dbReference type="PDB" id="3HUF">
    <property type="method" value="X-ray"/>
    <property type="resolution" value="2.15 A"/>
    <property type="chains" value="A/B/C=1-321"/>
</dbReference>
<dbReference type="PDB" id="3I0M">
    <property type="method" value="X-ray"/>
    <property type="resolution" value="2.60 A"/>
    <property type="chains" value="A=1-324"/>
</dbReference>
<dbReference type="PDB" id="3I0N">
    <property type="method" value="X-ray"/>
    <property type="resolution" value="2.30 A"/>
    <property type="chains" value="A/B=1-324"/>
</dbReference>
<dbReference type="PDB" id="4FBK">
    <property type="method" value="X-ray"/>
    <property type="resolution" value="2.38 A"/>
    <property type="chains" value="A/B=474-531"/>
</dbReference>
<dbReference type="PDB" id="4FBQ">
    <property type="method" value="X-ray"/>
    <property type="resolution" value="2.50 A"/>
    <property type="chains" value="A/B=474-531"/>
</dbReference>
<dbReference type="PDB" id="4FBW">
    <property type="method" value="X-ray"/>
    <property type="resolution" value="2.20 A"/>
    <property type="chains" value="C/D=474-531"/>
</dbReference>
<dbReference type="PDBsum" id="3HUE"/>
<dbReference type="PDBsum" id="3HUF"/>
<dbReference type="PDBsum" id="3I0M"/>
<dbReference type="PDBsum" id="3I0N"/>
<dbReference type="PDBsum" id="4FBK"/>
<dbReference type="PDBsum" id="4FBQ"/>
<dbReference type="PDBsum" id="4FBW"/>
<dbReference type="SMR" id="O43070"/>
<dbReference type="BioGRID" id="280382">
    <property type="interactions" value="14"/>
</dbReference>
<dbReference type="ComplexPortal" id="CPX-10302">
    <property type="entry name" value="MRN double-strand break repair complex"/>
</dbReference>
<dbReference type="DIP" id="DIP-52387N"/>
<dbReference type="FunCoup" id="O43070">
    <property type="interactions" value="18"/>
</dbReference>
<dbReference type="IntAct" id="O43070">
    <property type="interactions" value="3"/>
</dbReference>
<dbReference type="STRING" id="284812.O43070"/>
<dbReference type="iPTMnet" id="O43070"/>
<dbReference type="PaxDb" id="4896-SPBC6B1.09c.1"/>
<dbReference type="EnsemblFungi" id="SPBC6B1.09c.1">
    <property type="protein sequence ID" value="SPBC6B1.09c.1:pep"/>
    <property type="gene ID" value="SPBC6B1.09c"/>
</dbReference>
<dbReference type="GeneID" id="3361306"/>
<dbReference type="KEGG" id="spo:3361306"/>
<dbReference type="PomBase" id="SPBC6B1.09c">
    <property type="gene designation" value="nbs1"/>
</dbReference>
<dbReference type="VEuPathDB" id="FungiDB:SPBC6B1.09c"/>
<dbReference type="eggNOG" id="ENOG502RS0G">
    <property type="taxonomic scope" value="Eukaryota"/>
</dbReference>
<dbReference type="HOGENOM" id="CLU_445609_0_0_1"/>
<dbReference type="InParanoid" id="O43070"/>
<dbReference type="OMA" id="VHRHHTD"/>
<dbReference type="Reactome" id="R-SPO-2559586">
    <property type="pathway name" value="DNA Damage/Telomere Stress Induced Senescence"/>
</dbReference>
<dbReference type="Reactome" id="R-SPO-5685939">
    <property type="pathway name" value="HDR through MMEJ (alt-NHEJ)"/>
</dbReference>
<dbReference type="Reactome" id="R-SPO-5693548">
    <property type="pathway name" value="Sensing of DNA Double Strand Breaks"/>
</dbReference>
<dbReference type="Reactome" id="R-SPO-5693565">
    <property type="pathway name" value="Recruitment and ATM-mediated phosphorylation of repair and signaling proteins at DNA double strand breaks"/>
</dbReference>
<dbReference type="Reactome" id="R-SPO-5693607">
    <property type="pathway name" value="Processing of DNA double-strand break ends"/>
</dbReference>
<dbReference type="EvolutionaryTrace" id="O43070"/>
<dbReference type="PRO" id="PR:O43070"/>
<dbReference type="Proteomes" id="UP000002485">
    <property type="component" value="Chromosome II"/>
</dbReference>
<dbReference type="GO" id="GO:0140445">
    <property type="term" value="C:chromosome, telomeric repeat region"/>
    <property type="evidence" value="ECO:0000314"/>
    <property type="project" value="PomBase"/>
</dbReference>
<dbReference type="GO" id="GO:0030870">
    <property type="term" value="C:Mre11 complex"/>
    <property type="evidence" value="ECO:0000314"/>
    <property type="project" value="PomBase"/>
</dbReference>
<dbReference type="GO" id="GO:0005634">
    <property type="term" value="C:nucleus"/>
    <property type="evidence" value="ECO:0007005"/>
    <property type="project" value="PomBase"/>
</dbReference>
<dbReference type="GO" id="GO:0035861">
    <property type="term" value="C:site of double-strand break"/>
    <property type="evidence" value="ECO:0000314"/>
    <property type="project" value="PomBase"/>
</dbReference>
<dbReference type="GO" id="GO:0140463">
    <property type="term" value="F:chromatin-protein adaptor activity"/>
    <property type="evidence" value="ECO:0000314"/>
    <property type="project" value="UniProtKB"/>
</dbReference>
<dbReference type="GO" id="GO:0003684">
    <property type="term" value="F:damaged DNA binding"/>
    <property type="evidence" value="ECO:0000318"/>
    <property type="project" value="GO_Central"/>
</dbReference>
<dbReference type="GO" id="GO:0060090">
    <property type="term" value="F:molecular adaptor activity"/>
    <property type="evidence" value="ECO:0000269"/>
    <property type="project" value="DisProt"/>
</dbReference>
<dbReference type="GO" id="GO:0140031">
    <property type="term" value="F:phosphorylation-dependent protein binding"/>
    <property type="evidence" value="ECO:0000314"/>
    <property type="project" value="UniProtKB"/>
</dbReference>
<dbReference type="GO" id="GO:0000729">
    <property type="term" value="P:DNA double-strand break processing"/>
    <property type="evidence" value="ECO:0000315"/>
    <property type="project" value="PomBase"/>
</dbReference>
<dbReference type="GO" id="GO:0006281">
    <property type="term" value="P:DNA repair"/>
    <property type="evidence" value="ECO:0000315"/>
    <property type="project" value="UniProtKB"/>
</dbReference>
<dbReference type="GO" id="GO:0006302">
    <property type="term" value="P:double-strand break repair"/>
    <property type="evidence" value="ECO:0000316"/>
    <property type="project" value="PomBase"/>
</dbReference>
<dbReference type="GO" id="GO:0000724">
    <property type="term" value="P:double-strand break repair via homologous recombination"/>
    <property type="evidence" value="ECO:0000318"/>
    <property type="project" value="GO_Central"/>
</dbReference>
<dbReference type="GO" id="GO:0006303">
    <property type="term" value="P:double-strand break repair via nonhomologous end joining"/>
    <property type="evidence" value="ECO:0000315"/>
    <property type="project" value="PomBase"/>
</dbReference>
<dbReference type="GO" id="GO:0007095">
    <property type="term" value="P:mitotic G2 DNA damage checkpoint signaling"/>
    <property type="evidence" value="ECO:0000318"/>
    <property type="project" value="GO_Central"/>
</dbReference>
<dbReference type="GO" id="GO:0031573">
    <property type="term" value="P:mitotic intra-S DNA damage checkpoint signaling"/>
    <property type="evidence" value="ECO:0000315"/>
    <property type="project" value="PomBase"/>
</dbReference>
<dbReference type="GO" id="GO:0000723">
    <property type="term" value="P:telomere maintenance"/>
    <property type="evidence" value="ECO:0000314"/>
    <property type="project" value="UniProtKB"/>
</dbReference>
<dbReference type="GO" id="GO:0000722">
    <property type="term" value="P:telomere maintenance via recombination"/>
    <property type="evidence" value="ECO:0000316"/>
    <property type="project" value="PomBase"/>
</dbReference>
<dbReference type="CDD" id="cd22667">
    <property type="entry name" value="FHA_NBN"/>
    <property type="match status" value="1"/>
</dbReference>
<dbReference type="DisProt" id="DP02839"/>
<dbReference type="FunFam" id="2.60.200.20:FF:000082">
    <property type="entry name" value="DNA damage response protein RcaA"/>
    <property type="match status" value="1"/>
</dbReference>
<dbReference type="Gene3D" id="2.60.200.20">
    <property type="match status" value="1"/>
</dbReference>
<dbReference type="Gene3D" id="3.40.50.11080">
    <property type="match status" value="1"/>
</dbReference>
<dbReference type="Gene3D" id="3.40.50.10190">
    <property type="entry name" value="BRCT domain"/>
    <property type="match status" value="1"/>
</dbReference>
<dbReference type="IDEAL" id="IID50239"/>
<dbReference type="InterPro" id="IPR036420">
    <property type="entry name" value="BRCT_dom_sf"/>
</dbReference>
<dbReference type="InterPro" id="IPR000253">
    <property type="entry name" value="FHA_dom"/>
</dbReference>
<dbReference type="InterPro" id="IPR040227">
    <property type="entry name" value="Nibrin-rel"/>
</dbReference>
<dbReference type="InterPro" id="IPR008984">
    <property type="entry name" value="SMAD_FHA_dom_sf"/>
</dbReference>
<dbReference type="PANTHER" id="PTHR12162:SF0">
    <property type="entry name" value="NIBRIN"/>
    <property type="match status" value="1"/>
</dbReference>
<dbReference type="PANTHER" id="PTHR12162">
    <property type="entry name" value="NIBRIN-RELATED"/>
    <property type="match status" value="1"/>
</dbReference>
<dbReference type="Pfam" id="PF00498">
    <property type="entry name" value="FHA"/>
    <property type="match status" value="1"/>
</dbReference>
<dbReference type="SMART" id="SM00240">
    <property type="entry name" value="FHA"/>
    <property type="match status" value="1"/>
</dbReference>
<dbReference type="SUPFAM" id="SSF49879">
    <property type="entry name" value="SMAD/FHA domain"/>
    <property type="match status" value="1"/>
</dbReference>
<dbReference type="PROSITE" id="PS50006">
    <property type="entry name" value="FHA_DOMAIN"/>
    <property type="match status" value="1"/>
</dbReference>
<accession>O43070</accession>
<accession>Q86ZQ0</accession>
<name>NBS1_SCHPO</name>
<proteinExistence type="evidence at protein level"/>
<evidence type="ECO:0000250" key="1">
    <source>
        <dbReference type="UniProtKB" id="O60934"/>
    </source>
</evidence>
<evidence type="ECO:0000255" key="2">
    <source>
        <dbReference type="PROSITE-ProRule" id="PRU00086"/>
    </source>
</evidence>
<evidence type="ECO:0000256" key="3">
    <source>
        <dbReference type="SAM" id="MobiDB-lite"/>
    </source>
</evidence>
<evidence type="ECO:0000269" key="4">
    <source>
    </source>
</evidence>
<evidence type="ECO:0000269" key="5">
    <source>
    </source>
</evidence>
<evidence type="ECO:0000269" key="6">
    <source>
    </source>
</evidence>
<evidence type="ECO:0000269" key="7">
    <source>
    </source>
</evidence>
<evidence type="ECO:0000269" key="8">
    <source>
    </source>
</evidence>
<evidence type="ECO:0000269" key="9">
    <source>
    </source>
</evidence>
<evidence type="ECO:0000269" key="10">
    <source>
    </source>
</evidence>
<evidence type="ECO:0000303" key="11">
    <source>
    </source>
</evidence>
<evidence type="ECO:0000305" key="12"/>
<evidence type="ECO:0000312" key="13">
    <source>
        <dbReference type="PomBase" id="SPBC6B1.09c"/>
    </source>
</evidence>
<evidence type="ECO:0007744" key="14">
    <source>
        <dbReference type="PDB" id="3HUE"/>
    </source>
</evidence>
<evidence type="ECO:0007744" key="15">
    <source>
        <dbReference type="PDB" id="3HUF"/>
    </source>
</evidence>
<evidence type="ECO:0007744" key="16">
    <source>
        <dbReference type="PDB" id="3I0M"/>
    </source>
</evidence>
<evidence type="ECO:0007744" key="17">
    <source>
        <dbReference type="PDB" id="3I0N"/>
    </source>
</evidence>
<evidence type="ECO:0007744" key="18">
    <source>
        <dbReference type="PDB" id="4FBK"/>
    </source>
</evidence>
<evidence type="ECO:0007744" key="19">
    <source>
        <dbReference type="PDB" id="4FBQ"/>
    </source>
</evidence>
<evidence type="ECO:0007744" key="20">
    <source>
        <dbReference type="PDB" id="4FBW"/>
    </source>
</evidence>
<evidence type="ECO:0007829" key="21">
    <source>
        <dbReference type="PDB" id="3HUF"/>
    </source>
</evidence>
<evidence type="ECO:0007829" key="22">
    <source>
        <dbReference type="PDB" id="3I0M"/>
    </source>
</evidence>
<evidence type="ECO:0007829" key="23">
    <source>
        <dbReference type="PDB" id="3I0N"/>
    </source>
</evidence>
<evidence type="ECO:0007829" key="24">
    <source>
        <dbReference type="PDB" id="4FBK"/>
    </source>
</evidence>
<evidence type="ECO:0007829" key="25">
    <source>
        <dbReference type="PDB" id="4FBW"/>
    </source>
</evidence>
<gene>
    <name evidence="11 13" type="primary">nbs1</name>
    <name type="ORF">SPBC6B1.09c</name>
</gene>
<comment type="function">
    <text evidence="1 4 5 6 8 10">Component of the MRN complex, which plays a central role in double-strand break (DSB) repair, DNA recombination, maintenance of telomere integrity and meiosis (PubMed:12944481, PubMed:12944482, PubMed:15964794, PubMed:19804755, PubMed:22705791). The MRN complex is involved in the repair of DNA double-strand breaks (DSBs) via homologous recombination (HR), an error-free mechanism which primarily occurs during S and G2 phases (PubMed:12944481, PubMed:12944482, PubMed:15964794, PubMed:19804755, PubMed:22705791). The complex (1) mediates the end resection of damaged DNA, which generates proper single-stranded DNA, a key initial steps in HR, and is (2) required for the recruitment of other repair factors and efficient activation of tel1/atm upon DNA damage (PubMed:15964794, PubMed:19804755). The MRN complex possesses single-strand endonuclease activity and double-strand-specific 3'-5' exonuclease activity, which are provided by MRE11, to initiate end resection, which is required for single-strand invasion and recombination (By similarity). Within the MRN complex, nbs1 acts as a protein-protein adapter, which specifically recognizes and binds phosphorylated proteins, promoting their recruitment to DNA damage sites (PubMed:19804755, PubMed:22705791). Recruits rad32 and rad50 components of the MRN complex to DSBs in response to DNA damage (By similarity). Promotes the recruitment of tel1/atm to the DNA damage sites, activating tel1/atm function (PubMed:15964794). Mediates the recruitment of phosphorylated ctp1/CtIP to DSBs, leading to cooperation between the MRN complex and ctp1/CtIP to initiate end resection (PubMed:19804755).</text>
</comment>
<comment type="subunit">
    <text evidence="5 6 8 9 10">Component of the MRN complex composed of two heterodimers rad32 and rad50 associated with a single nbs1 (PubMed:12944482, PubMed:22705791). Interacts with (phosphorylated) ctp1/CtIP (PubMed:19804755, PubMed:19804756). Interacts (via FxF/Y motif) with tel1/atm (PubMed:15964794).</text>
</comment>
<comment type="interaction">
    <interactant intactId="EBI-2125045">
        <id>O43070</id>
    </interactant>
    <interactant intactId="EBI-2463766">
        <id>O74986</id>
        <label>ctp1</label>
    </interactant>
    <organismsDiffer>false</organismsDiffer>
    <experiments>6</experiments>
</comment>
<comment type="interaction">
    <interactant intactId="EBI-2125045">
        <id>O43070</id>
    </interactant>
    <interactant intactId="EBI-2124866">
        <id>Q09683</id>
        <label>rad32</label>
    </interactant>
    <organismsDiffer>false</organismsDiffer>
    <experiments>6</experiments>
</comment>
<comment type="interaction">
    <interactant intactId="EBI-2125045">
        <id>O43070</id>
    </interactant>
    <interactant intactId="EBI-495644">
        <id>Q14676</id>
        <label>MDC1</label>
    </interactant>
    <organismsDiffer>true</organismsDiffer>
    <experiments>2</experiments>
</comment>
<comment type="subcellular location">
    <subcellularLocation>
        <location evidence="4">Nucleus</location>
    </subcellularLocation>
    <subcellularLocation>
        <location evidence="8">Chromosome</location>
    </subcellularLocation>
    <subcellularLocation>
        <location evidence="4 5">Chromosome</location>
        <location evidence="4 5">Telomere</location>
    </subcellularLocation>
    <text evidence="8">Localizes to DNA double-strand breaks (DSBs); recruited to DNA damage sites.</text>
</comment>
<comment type="domain">
    <text evidence="8 9">The FHA and BRCT domains specifically recognize and bind phosphorylated proteins.</text>
</comment>
<comment type="similarity">
    <text evidence="12">Belongs to the Nibrin family.</text>
</comment>
<protein>
    <recommendedName>
        <fullName>DNA repair and telomere maintenance protein nbs1</fullName>
    </recommendedName>
</protein>
<keyword id="KW-0002">3D-structure</keyword>
<keyword id="KW-0158">Chromosome</keyword>
<keyword id="KW-0227">DNA damage</keyword>
<keyword id="KW-0234">DNA repair</keyword>
<keyword id="KW-0539">Nucleus</keyword>
<keyword id="KW-0597">Phosphoprotein</keyword>
<keyword id="KW-1185">Reference proteome</keyword>
<keyword id="KW-0779">Telomere</keyword>
<reference key="1">
    <citation type="journal article" date="2003" name="Mol. Cell. Biol.">
        <title>Molecular characterization of the Schizosaccharomyces pombe nbs1+ gene involved in DNA repair and telomere maintenance.</title>
        <authorList>
            <person name="Ueno M."/>
            <person name="Nakazaki T."/>
            <person name="Akamatsu Y."/>
            <person name="Watanabe K."/>
            <person name="Tomita K."/>
            <person name="Lindsay H.D."/>
            <person name="Shinagawa H."/>
            <person name="Iwasaki H."/>
        </authorList>
    </citation>
    <scope>NUCLEOTIDE SEQUENCE [MRNA]</scope>
    <scope>FUNCTION</scope>
    <scope>SUBCELLULAR LOCATION</scope>
</reference>
<reference key="2">
    <citation type="journal article" date="2003" name="Mol. Cell. Biol.">
        <title>The fission yeast Rad32 (Mre11)-Rad50-Nbs1 complex is required for the S-phase DNA damage checkpoint.</title>
        <authorList>
            <person name="Chahwan C."/>
            <person name="Nakamura T.M."/>
            <person name="Sivakumar S."/>
            <person name="Russell P."/>
            <person name="Rhind N."/>
        </authorList>
    </citation>
    <scope>NUCLEOTIDE SEQUENCE [MRNA]</scope>
    <scope>FUNCTION</scope>
    <scope>SUBUNIT</scope>
    <scope>SUBCELLULAR LOCATION</scope>
</reference>
<reference evidence="12" key="3">
    <citation type="journal article" date="2002" name="Nature">
        <title>The genome sequence of Schizosaccharomyces pombe.</title>
        <authorList>
            <person name="Wood V."/>
            <person name="Gwilliam R."/>
            <person name="Rajandream M.A."/>
            <person name="Lyne M.H."/>
            <person name="Lyne R."/>
            <person name="Stewart A."/>
            <person name="Sgouros J.G."/>
            <person name="Peat N."/>
            <person name="Hayles J."/>
            <person name="Baker S.G."/>
            <person name="Basham D."/>
            <person name="Bowman S."/>
            <person name="Brooks K."/>
            <person name="Brown D."/>
            <person name="Brown S."/>
            <person name="Chillingworth T."/>
            <person name="Churcher C.M."/>
            <person name="Collins M."/>
            <person name="Connor R."/>
            <person name="Cronin A."/>
            <person name="Davis P."/>
            <person name="Feltwell T."/>
            <person name="Fraser A."/>
            <person name="Gentles S."/>
            <person name="Goble A."/>
            <person name="Hamlin N."/>
            <person name="Harris D.E."/>
            <person name="Hidalgo J."/>
            <person name="Hodgson G."/>
            <person name="Holroyd S."/>
            <person name="Hornsby T."/>
            <person name="Howarth S."/>
            <person name="Huckle E.J."/>
            <person name="Hunt S."/>
            <person name="Jagels K."/>
            <person name="James K.D."/>
            <person name="Jones L."/>
            <person name="Jones M."/>
            <person name="Leather S."/>
            <person name="McDonald S."/>
            <person name="McLean J."/>
            <person name="Mooney P."/>
            <person name="Moule S."/>
            <person name="Mungall K.L."/>
            <person name="Murphy L.D."/>
            <person name="Niblett D."/>
            <person name="Odell C."/>
            <person name="Oliver K."/>
            <person name="O'Neil S."/>
            <person name="Pearson D."/>
            <person name="Quail M.A."/>
            <person name="Rabbinowitsch E."/>
            <person name="Rutherford K.M."/>
            <person name="Rutter S."/>
            <person name="Saunders D."/>
            <person name="Seeger K."/>
            <person name="Sharp S."/>
            <person name="Skelton J."/>
            <person name="Simmonds M.N."/>
            <person name="Squares R."/>
            <person name="Squares S."/>
            <person name="Stevens K."/>
            <person name="Taylor K."/>
            <person name="Taylor R.G."/>
            <person name="Tivey A."/>
            <person name="Walsh S.V."/>
            <person name="Warren T."/>
            <person name="Whitehead S."/>
            <person name="Woodward J.R."/>
            <person name="Volckaert G."/>
            <person name="Aert R."/>
            <person name="Robben J."/>
            <person name="Grymonprez B."/>
            <person name="Weltjens I."/>
            <person name="Vanstreels E."/>
            <person name="Rieger M."/>
            <person name="Schaefer M."/>
            <person name="Mueller-Auer S."/>
            <person name="Gabel C."/>
            <person name="Fuchs M."/>
            <person name="Duesterhoeft A."/>
            <person name="Fritzc C."/>
            <person name="Holzer E."/>
            <person name="Moestl D."/>
            <person name="Hilbert H."/>
            <person name="Borzym K."/>
            <person name="Langer I."/>
            <person name="Beck A."/>
            <person name="Lehrach H."/>
            <person name="Reinhardt R."/>
            <person name="Pohl T.M."/>
            <person name="Eger P."/>
            <person name="Zimmermann W."/>
            <person name="Wedler H."/>
            <person name="Wambutt R."/>
            <person name="Purnelle B."/>
            <person name="Goffeau A."/>
            <person name="Cadieu E."/>
            <person name="Dreano S."/>
            <person name="Gloux S."/>
            <person name="Lelaure V."/>
            <person name="Mottier S."/>
            <person name="Galibert F."/>
            <person name="Aves S.J."/>
            <person name="Xiang Z."/>
            <person name="Hunt C."/>
            <person name="Moore K."/>
            <person name="Hurst S.M."/>
            <person name="Lucas M."/>
            <person name="Rochet M."/>
            <person name="Gaillardin C."/>
            <person name="Tallada V.A."/>
            <person name="Garzon A."/>
            <person name="Thode G."/>
            <person name="Daga R.R."/>
            <person name="Cruzado L."/>
            <person name="Jimenez J."/>
            <person name="Sanchez M."/>
            <person name="del Rey F."/>
            <person name="Benito J."/>
            <person name="Dominguez A."/>
            <person name="Revuelta J.L."/>
            <person name="Moreno S."/>
            <person name="Armstrong J."/>
            <person name="Forsburg S.L."/>
            <person name="Cerutti L."/>
            <person name="Lowe T."/>
            <person name="McCombie W.R."/>
            <person name="Paulsen I."/>
            <person name="Potashkin J."/>
            <person name="Shpakovski G.V."/>
            <person name="Ussery D."/>
            <person name="Barrell B.G."/>
            <person name="Nurse P."/>
        </authorList>
    </citation>
    <scope>NUCLEOTIDE SEQUENCE [LARGE SCALE GENOMIC DNA]</scope>
    <source>
        <strain>972 / ATCC 24843</strain>
    </source>
</reference>
<reference key="4">
    <citation type="journal article" date="2008" name="J. Proteome Res.">
        <title>Phosphoproteome analysis of fission yeast.</title>
        <authorList>
            <person name="Wilson-Grady J.T."/>
            <person name="Villen J."/>
            <person name="Gygi S.P."/>
        </authorList>
    </citation>
    <scope>PHOSPHORYLATION [LARGE SCALE ANALYSIS] AT SER-355</scope>
    <scope>IDENTIFICATION BY MASS SPECTROMETRY</scope>
</reference>
<reference key="5">
    <citation type="journal article" date="2005" name="Mol. Cell. Biol.">
        <title>ATM activation and its recruitment to damaged DNA require binding to the C-terminus of Nbs1.</title>
        <authorList>
            <person name="You Z."/>
            <person name="Chahwan C."/>
            <person name="Bailis J."/>
            <person name="Hunter T."/>
            <person name="Russell P."/>
        </authorList>
    </citation>
    <scope>FUNCTION</scope>
    <scope>INTERACTION WITH TEL1</scope>
</reference>
<reference evidence="14 15" key="6">
    <citation type="journal article" date="2009" name="Cell">
        <title>Nbs1 flexibly tethers Ctp1 and Mre11-Rad50 to coordinate DNA double-strand break processing and repair.</title>
        <authorList>
            <person name="Williams R.S."/>
            <person name="Dodson G.E."/>
            <person name="Limbo O."/>
            <person name="Yamada Y."/>
            <person name="Williams J.S."/>
            <person name="Guenther G."/>
            <person name="Classen S."/>
            <person name="Glover J.N."/>
            <person name="Iwasaki H."/>
            <person name="Russell P."/>
            <person name="Tainer J.A."/>
        </authorList>
    </citation>
    <scope>X-RAY CRYSTALLOGRAPHY (2.15 ANGSTROMS) OF 1-321 IN COMPLEX WITH CTP1</scope>
    <scope>FUNCTION</scope>
    <scope>SUBCELLULAR LOCATION</scope>
    <scope>DOMAIN</scope>
    <scope>INTERACTION WITH CTP1</scope>
</reference>
<reference evidence="16 17" key="7">
    <citation type="journal article" date="2009" name="Cell">
        <title>A supramodular FHA/BRCT-repeat architecture mediates Nbs1 adaptor function in response to DNA damage.</title>
        <authorList>
            <person name="Lloyd J."/>
            <person name="Chapman J.R."/>
            <person name="Clapperton J.A."/>
            <person name="Haire L.F."/>
            <person name="Hartsuiker E."/>
            <person name="Li J."/>
            <person name="Carr A.M."/>
            <person name="Jackson S.P."/>
            <person name="Smerdon S.J."/>
        </authorList>
    </citation>
    <scope>X-RAY CRYSTALLOGRAPHY (2.30 ANGSTROMS) OF 1-324</scope>
    <scope>FUNCTION</scope>
    <scope>DOMAIN</scope>
    <scope>INTERACTION WITH CTP1</scope>
    <scope>MUTAGENESIS OF ARG-27; LYS-45; LYS-76 AND GLY-103</scope>
</reference>
<reference evidence="18 19 20" key="8">
    <citation type="journal article" date="2012" name="Nat. Struct. Mol. Biol.">
        <title>Structure of Mre11-Nbs1 complex yields insights into ataxia-telangiectasia-like disease mutations and DNA damage signaling.</title>
        <authorList>
            <person name="Schiller C.B."/>
            <person name="Lammens K."/>
            <person name="Guerini I."/>
            <person name="Coordes B."/>
            <person name="Feldmann H."/>
            <person name="Schlauderer F."/>
            <person name="Moeckel C."/>
            <person name="Schele A."/>
            <person name="Straesser K."/>
            <person name="Jackson S.P."/>
            <person name="Hopfner K.P."/>
        </authorList>
    </citation>
    <scope>X-RAY CRYSTALLOGRAPHY (2.20 ANGSTROMS) OF 474-531 IN COMPLEX WITH RAD32</scope>
    <scope>FUNCTION</scope>
    <scope>INTERACTION WITH RAD32</scope>
</reference>